<proteinExistence type="inferred from homology"/>
<sequence length="251" mass="27602">MTEAQRHQILLEMLAQLGFVTVEKVVERLGISPATARRDINKLDESGKLKKVRNGAEAITQQRPRWTPMNLHQAQNHDEKVRIAKAASQLVNPGESVVINCGSTAFLLGREMCGKPVQIITNYLPLANYLIDQEHDSVIIMGGQYNKSQSITLSPQGSENSLYAGHWMFTSGKGLTAEGLYKTDMLTAMAEQKMLSVVGKLVVLVDSSKIGERAGMLFSRADQIDMLITGKNANPEILQQLEAQGVSILRV</sequence>
<feature type="chain" id="PRO_0000050279" description="HTH-type transcriptional regulator UlaR">
    <location>
        <begin position="1"/>
        <end position="251"/>
    </location>
</feature>
<feature type="domain" description="HTH deoR-type" evidence="1">
    <location>
        <begin position="3"/>
        <end position="58"/>
    </location>
</feature>
<feature type="DNA-binding region" description="H-T-H motif" evidence="1">
    <location>
        <begin position="20"/>
        <end position="39"/>
    </location>
</feature>
<reference key="1">
    <citation type="journal article" date="2002" name="Proc. Natl. Acad. Sci. U.S.A.">
        <title>Extensive mosaic structure revealed by the complete genome sequence of uropathogenic Escherichia coli.</title>
        <authorList>
            <person name="Welch R.A."/>
            <person name="Burland V."/>
            <person name="Plunkett G. III"/>
            <person name="Redford P."/>
            <person name="Roesch P."/>
            <person name="Rasko D."/>
            <person name="Buckles E.L."/>
            <person name="Liou S.-R."/>
            <person name="Boutin A."/>
            <person name="Hackett J."/>
            <person name="Stroud D."/>
            <person name="Mayhew G.F."/>
            <person name="Rose D.J."/>
            <person name="Zhou S."/>
            <person name="Schwartz D.C."/>
            <person name="Perna N.T."/>
            <person name="Mobley H.L.T."/>
            <person name="Donnenberg M.S."/>
            <person name="Blattner F.R."/>
        </authorList>
    </citation>
    <scope>NUCLEOTIDE SEQUENCE [LARGE SCALE GENOMIC DNA]</scope>
    <source>
        <strain>CFT073 / ATCC 700928 / UPEC</strain>
    </source>
</reference>
<gene>
    <name evidence="1" type="primary">ulaR</name>
    <name type="ordered locus">c5279</name>
</gene>
<keyword id="KW-0963">Cytoplasm</keyword>
<keyword id="KW-0238">DNA-binding</keyword>
<keyword id="KW-1185">Reference proteome</keyword>
<keyword id="KW-0678">Repressor</keyword>
<keyword id="KW-0804">Transcription</keyword>
<keyword id="KW-0805">Transcription regulation</keyword>
<organism>
    <name type="scientific">Escherichia coli O6:H1 (strain CFT073 / ATCC 700928 / UPEC)</name>
    <dbReference type="NCBI Taxonomy" id="199310"/>
    <lineage>
        <taxon>Bacteria</taxon>
        <taxon>Pseudomonadati</taxon>
        <taxon>Pseudomonadota</taxon>
        <taxon>Gammaproteobacteria</taxon>
        <taxon>Enterobacterales</taxon>
        <taxon>Enterobacteriaceae</taxon>
        <taxon>Escherichia</taxon>
    </lineage>
</organism>
<protein>
    <recommendedName>
        <fullName evidence="1">HTH-type transcriptional regulator UlaR</fullName>
    </recommendedName>
</protein>
<accession>P0A9W1</accession>
<accession>P39299</accession>
<evidence type="ECO:0000255" key="1">
    <source>
        <dbReference type="HAMAP-Rule" id="MF_01563"/>
    </source>
</evidence>
<dbReference type="EMBL" id="AE014075">
    <property type="protein sequence ID" value="AAN83700.1"/>
    <property type="molecule type" value="Genomic_DNA"/>
</dbReference>
<dbReference type="RefSeq" id="WP_000133631.1">
    <property type="nucleotide sequence ID" value="NZ_CP051263.1"/>
</dbReference>
<dbReference type="SMR" id="P0A9W1"/>
<dbReference type="STRING" id="199310.c5279"/>
<dbReference type="GeneID" id="75202425"/>
<dbReference type="KEGG" id="ecc:c5279"/>
<dbReference type="eggNOG" id="COG1349">
    <property type="taxonomic scope" value="Bacteria"/>
</dbReference>
<dbReference type="HOGENOM" id="CLU_060699_3_2_6"/>
<dbReference type="BioCyc" id="ECOL199310:C5279-MONOMER"/>
<dbReference type="Proteomes" id="UP000001410">
    <property type="component" value="Chromosome"/>
</dbReference>
<dbReference type="GO" id="GO:0005737">
    <property type="term" value="C:cytoplasm"/>
    <property type="evidence" value="ECO:0007669"/>
    <property type="project" value="UniProtKB-SubCell"/>
</dbReference>
<dbReference type="GO" id="GO:0003677">
    <property type="term" value="F:DNA binding"/>
    <property type="evidence" value="ECO:0007669"/>
    <property type="project" value="UniProtKB-KW"/>
</dbReference>
<dbReference type="GO" id="GO:0003700">
    <property type="term" value="F:DNA-binding transcription factor activity"/>
    <property type="evidence" value="ECO:0007669"/>
    <property type="project" value="InterPro"/>
</dbReference>
<dbReference type="GO" id="GO:0045892">
    <property type="term" value="P:negative regulation of DNA-templated transcription"/>
    <property type="evidence" value="ECO:0007669"/>
    <property type="project" value="UniProtKB-UniRule"/>
</dbReference>
<dbReference type="FunFam" id="1.10.10.10:FF:000160">
    <property type="entry name" value="HTH-type transcriptional regulator UlaR"/>
    <property type="match status" value="1"/>
</dbReference>
<dbReference type="Gene3D" id="1.10.10.10">
    <property type="entry name" value="Winged helix-like DNA-binding domain superfamily/Winged helix DNA-binding domain"/>
    <property type="match status" value="1"/>
</dbReference>
<dbReference type="HAMAP" id="MF_01563">
    <property type="entry name" value="HTH_type_UlaR"/>
    <property type="match status" value="1"/>
</dbReference>
<dbReference type="InterPro" id="IPR050313">
    <property type="entry name" value="Carb_Metab_HTH_regulators"/>
</dbReference>
<dbReference type="InterPro" id="IPR014036">
    <property type="entry name" value="DeoR-like_C"/>
</dbReference>
<dbReference type="InterPro" id="IPR001034">
    <property type="entry name" value="DeoR_HTH"/>
</dbReference>
<dbReference type="InterPro" id="IPR037171">
    <property type="entry name" value="NagB/RpiA_transferase-like"/>
</dbReference>
<dbReference type="InterPro" id="IPR018356">
    <property type="entry name" value="Tscrpt_reg_HTH_DeoR_CS"/>
</dbReference>
<dbReference type="InterPro" id="IPR023711">
    <property type="entry name" value="Tscrpt_reg_HTH_UlaR"/>
</dbReference>
<dbReference type="InterPro" id="IPR036388">
    <property type="entry name" value="WH-like_DNA-bd_sf"/>
</dbReference>
<dbReference type="InterPro" id="IPR036390">
    <property type="entry name" value="WH_DNA-bd_sf"/>
</dbReference>
<dbReference type="NCBIfam" id="NF010034">
    <property type="entry name" value="PRK13509.1"/>
    <property type="match status" value="1"/>
</dbReference>
<dbReference type="PANTHER" id="PTHR30363">
    <property type="entry name" value="HTH-TYPE TRANSCRIPTIONAL REGULATOR SRLR-RELATED"/>
    <property type="match status" value="1"/>
</dbReference>
<dbReference type="PANTHER" id="PTHR30363:SF55">
    <property type="entry name" value="HTH-TYPE TRANSCRIPTIONAL REGULATOR ULAR"/>
    <property type="match status" value="1"/>
</dbReference>
<dbReference type="Pfam" id="PF00455">
    <property type="entry name" value="DeoRC"/>
    <property type="match status" value="1"/>
</dbReference>
<dbReference type="Pfam" id="PF08220">
    <property type="entry name" value="HTH_DeoR"/>
    <property type="match status" value="1"/>
</dbReference>
<dbReference type="PRINTS" id="PR00037">
    <property type="entry name" value="HTHLACR"/>
</dbReference>
<dbReference type="SMART" id="SM01134">
    <property type="entry name" value="DeoRC"/>
    <property type="match status" value="1"/>
</dbReference>
<dbReference type="SMART" id="SM00420">
    <property type="entry name" value="HTH_DEOR"/>
    <property type="match status" value="1"/>
</dbReference>
<dbReference type="SUPFAM" id="SSF100950">
    <property type="entry name" value="NagB/RpiA/CoA transferase-like"/>
    <property type="match status" value="1"/>
</dbReference>
<dbReference type="SUPFAM" id="SSF46785">
    <property type="entry name" value="Winged helix' DNA-binding domain"/>
    <property type="match status" value="1"/>
</dbReference>
<dbReference type="PROSITE" id="PS00894">
    <property type="entry name" value="HTH_DEOR_1"/>
    <property type="match status" value="1"/>
</dbReference>
<dbReference type="PROSITE" id="PS51000">
    <property type="entry name" value="HTH_DEOR_2"/>
    <property type="match status" value="1"/>
</dbReference>
<name>ULAR_ECOL6</name>
<comment type="function">
    <text evidence="1">Represses ulaG and the ulaABCDEF operon.</text>
</comment>
<comment type="subcellular location">
    <subcellularLocation>
        <location evidence="1">Cytoplasm</location>
    </subcellularLocation>
</comment>